<dbReference type="EMBL" id="BC073320">
    <property type="protein sequence ID" value="AAH73320.1"/>
    <property type="molecule type" value="mRNA"/>
</dbReference>
<dbReference type="RefSeq" id="NP_001085769.1">
    <property type="nucleotide sequence ID" value="NM_001092300.1"/>
</dbReference>
<dbReference type="DNASU" id="444196"/>
<dbReference type="GeneID" id="444196"/>
<dbReference type="KEGG" id="xla:444196"/>
<dbReference type="AGR" id="Xenbase:XB-GENE-994518"/>
<dbReference type="CTD" id="444196"/>
<dbReference type="Xenbase" id="XB-GENE-994518">
    <property type="gene designation" value="srpx2.L"/>
</dbReference>
<dbReference type="OrthoDB" id="6136178at2759"/>
<dbReference type="Proteomes" id="UP000186698">
    <property type="component" value="Chromosome 8L"/>
</dbReference>
<dbReference type="Bgee" id="444196">
    <property type="expression patterns" value="Expressed in lung and 10 other cell types or tissues"/>
</dbReference>
<dbReference type="GO" id="GO:0009986">
    <property type="term" value="C:cell surface"/>
    <property type="evidence" value="ECO:0000250"/>
    <property type="project" value="UniProtKB"/>
</dbReference>
<dbReference type="GO" id="GO:0005737">
    <property type="term" value="C:cytoplasm"/>
    <property type="evidence" value="ECO:0007669"/>
    <property type="project" value="UniProtKB-SubCell"/>
</dbReference>
<dbReference type="GO" id="GO:0060076">
    <property type="term" value="C:excitatory synapse"/>
    <property type="evidence" value="ECO:0000250"/>
    <property type="project" value="UniProtKB"/>
</dbReference>
<dbReference type="GO" id="GO:0005576">
    <property type="term" value="C:extracellular region"/>
    <property type="evidence" value="ECO:0007669"/>
    <property type="project" value="UniProtKB-SubCell"/>
</dbReference>
<dbReference type="GO" id="GO:0097060">
    <property type="term" value="C:synaptic membrane"/>
    <property type="evidence" value="ECO:0000250"/>
    <property type="project" value="UniProtKB"/>
</dbReference>
<dbReference type="GO" id="GO:0005102">
    <property type="term" value="F:signaling receptor binding"/>
    <property type="evidence" value="ECO:0000318"/>
    <property type="project" value="GO_Central"/>
</dbReference>
<dbReference type="GO" id="GO:0001525">
    <property type="term" value="P:angiogenesis"/>
    <property type="evidence" value="ECO:0007669"/>
    <property type="project" value="UniProtKB-KW"/>
</dbReference>
<dbReference type="GO" id="GO:0098609">
    <property type="term" value="P:cell-cell adhesion"/>
    <property type="evidence" value="ECO:0000318"/>
    <property type="project" value="GO_Central"/>
</dbReference>
<dbReference type="GO" id="GO:0090050">
    <property type="term" value="P:positive regulation of cell migration involved in sprouting angiogenesis"/>
    <property type="evidence" value="ECO:0000250"/>
    <property type="project" value="UniProtKB"/>
</dbReference>
<dbReference type="GO" id="GO:0051965">
    <property type="term" value="P:positive regulation of synapse assembly"/>
    <property type="evidence" value="ECO:0000250"/>
    <property type="project" value="UniProtKB"/>
</dbReference>
<dbReference type="CDD" id="cd00033">
    <property type="entry name" value="CCP"/>
    <property type="match status" value="3"/>
</dbReference>
<dbReference type="FunFam" id="2.10.70.10:FF:000024">
    <property type="entry name" value="Sushi repeat-containing protein SRPX"/>
    <property type="match status" value="1"/>
</dbReference>
<dbReference type="Gene3D" id="2.10.70.10">
    <property type="entry name" value="Complement Module, domain 1"/>
    <property type="match status" value="3"/>
</dbReference>
<dbReference type="InterPro" id="IPR025232">
    <property type="entry name" value="DUF4174"/>
</dbReference>
<dbReference type="InterPro" id="IPR003410">
    <property type="entry name" value="HYR_dom"/>
</dbReference>
<dbReference type="InterPro" id="IPR043555">
    <property type="entry name" value="SRPX-like"/>
</dbReference>
<dbReference type="InterPro" id="IPR035976">
    <property type="entry name" value="Sushi/SCR/CCP_sf"/>
</dbReference>
<dbReference type="InterPro" id="IPR000436">
    <property type="entry name" value="Sushi_SCR_CCP_dom"/>
</dbReference>
<dbReference type="PANTHER" id="PTHR46343">
    <property type="entry name" value="HYR DOMAIN-CONTAINING PROTEIN"/>
    <property type="match status" value="1"/>
</dbReference>
<dbReference type="PANTHER" id="PTHR46343:SF3">
    <property type="entry name" value="SUSHI REPEAT-CONTAINING PROTEIN SRPX2"/>
    <property type="match status" value="1"/>
</dbReference>
<dbReference type="Pfam" id="PF13778">
    <property type="entry name" value="DUF4174"/>
    <property type="match status" value="1"/>
</dbReference>
<dbReference type="Pfam" id="PF02494">
    <property type="entry name" value="HYR"/>
    <property type="match status" value="1"/>
</dbReference>
<dbReference type="Pfam" id="PF00084">
    <property type="entry name" value="Sushi"/>
    <property type="match status" value="3"/>
</dbReference>
<dbReference type="SMART" id="SM00032">
    <property type="entry name" value="CCP"/>
    <property type="match status" value="3"/>
</dbReference>
<dbReference type="SUPFAM" id="SSF57535">
    <property type="entry name" value="Complement control module/SCR domain"/>
    <property type="match status" value="3"/>
</dbReference>
<dbReference type="PROSITE" id="PS50825">
    <property type="entry name" value="HYR"/>
    <property type="match status" value="1"/>
</dbReference>
<dbReference type="PROSITE" id="PS50923">
    <property type="entry name" value="SUSHI"/>
    <property type="match status" value="3"/>
</dbReference>
<accession>Q6GP28</accession>
<gene>
    <name type="primary">srpx2</name>
</gene>
<proteinExistence type="evidence at transcript level"/>
<organism>
    <name type="scientific">Xenopus laevis</name>
    <name type="common">African clawed frog</name>
    <dbReference type="NCBI Taxonomy" id="8355"/>
    <lineage>
        <taxon>Eukaryota</taxon>
        <taxon>Metazoa</taxon>
        <taxon>Chordata</taxon>
        <taxon>Craniata</taxon>
        <taxon>Vertebrata</taxon>
        <taxon>Euteleostomi</taxon>
        <taxon>Amphibia</taxon>
        <taxon>Batrachia</taxon>
        <taxon>Anura</taxon>
        <taxon>Pipoidea</taxon>
        <taxon>Pipidae</taxon>
        <taxon>Xenopodinae</taxon>
        <taxon>Xenopus</taxon>
        <taxon>Xenopus</taxon>
    </lineage>
</organism>
<sequence>MEASITVLLFAFTKVASSLYYEGSGHSDGEIQTNEVYVESRPLGPYRAPRWCYDLHISDGEATCYSPLGPRYRSTLGTRCRLSCDQGFKLIGQSSVQCLSSRRWSGNGHCRRIQCHVLPPIFYGSYHCSVGVSEGSRCDYSCAPGYMVEGDRSRICMEDGQWSGGEPVCVDLDPPKIQCPVSRMKVAEPEKLTARIFWGNPQVKDSADGVITRVFLRGPEPGSELPEGEHVIRYTAYDRAHNRASCKFIVKVQVRRCPDLTPPLHGYLTCSAAGNNYGATCEYHCEGGYERQGPAARVCQFSQNWAGTPSTCTPMLINVNVNSAGAFIDQFFEKQRLLFISSPSSSDRYYRMQTTALQSSGCGLEQRHVLIVELIGESPREVGRVRNQQLSKELIEELRQVLRISRSYFNMVLIDKHGVDRDRYRQPTASEDIFLFIDTYLLSPRELSQVESNKENCD</sequence>
<protein>
    <recommendedName>
        <fullName>Sushi repeat-containing protein SRPX2</fullName>
    </recommendedName>
</protein>
<comment type="function">
    <text evidence="1">May play a role in angiogenesis, synapse formation, cellular migration and adhesion.</text>
</comment>
<comment type="subunit">
    <text evidence="1">Forms homooligomers.</text>
</comment>
<comment type="subcellular location">
    <subcellularLocation>
        <location evidence="1">Secreted</location>
    </subcellularLocation>
    <subcellularLocation>
        <location evidence="1">Cytoplasm</location>
    </subcellularLocation>
    <subcellularLocation>
        <location evidence="1">Cell surface</location>
    </subcellularLocation>
    <subcellularLocation>
        <location evidence="1">Synapse</location>
    </subcellularLocation>
</comment>
<feature type="signal peptide" evidence="2">
    <location>
        <begin position="1"/>
        <end position="18"/>
    </location>
</feature>
<feature type="chain" id="PRO_0000274527" description="Sushi repeat-containing protein SRPX2">
    <location>
        <begin position="19"/>
        <end position="458"/>
    </location>
</feature>
<feature type="domain" description="Sushi 1" evidence="4">
    <location>
        <begin position="62"/>
        <end position="112"/>
    </location>
</feature>
<feature type="domain" description="Sushi 2" evidence="4">
    <location>
        <begin position="113"/>
        <end position="171"/>
    </location>
</feature>
<feature type="domain" description="HYR" evidence="3">
    <location>
        <begin position="170"/>
        <end position="254"/>
    </location>
</feature>
<feature type="domain" description="Sushi 3" evidence="4">
    <location>
        <begin position="255"/>
        <end position="314"/>
    </location>
</feature>
<feature type="disulfide bond" evidence="4">
    <location>
        <begin position="64"/>
        <end position="98"/>
    </location>
</feature>
<feature type="disulfide bond" evidence="4">
    <location>
        <begin position="84"/>
        <end position="110"/>
    </location>
</feature>
<feature type="disulfide bond" evidence="4">
    <location>
        <begin position="115"/>
        <end position="156"/>
    </location>
</feature>
<feature type="disulfide bond" evidence="4">
    <location>
        <begin position="142"/>
        <end position="169"/>
    </location>
</feature>
<feature type="disulfide bond" evidence="4">
    <location>
        <begin position="257"/>
        <end position="299"/>
    </location>
</feature>
<feature type="disulfide bond" evidence="4">
    <location>
        <begin position="285"/>
        <end position="312"/>
    </location>
</feature>
<keyword id="KW-0037">Angiogenesis</keyword>
<keyword id="KW-0130">Cell adhesion</keyword>
<keyword id="KW-0963">Cytoplasm</keyword>
<keyword id="KW-1015">Disulfide bond</keyword>
<keyword id="KW-1185">Reference proteome</keyword>
<keyword id="KW-0677">Repeat</keyword>
<keyword id="KW-0964">Secreted</keyword>
<keyword id="KW-0732">Signal</keyword>
<keyword id="KW-0768">Sushi</keyword>
<keyword id="KW-0770">Synapse</keyword>
<evidence type="ECO:0000250" key="1"/>
<evidence type="ECO:0000255" key="2"/>
<evidence type="ECO:0000255" key="3">
    <source>
        <dbReference type="PROSITE-ProRule" id="PRU00113"/>
    </source>
</evidence>
<evidence type="ECO:0000255" key="4">
    <source>
        <dbReference type="PROSITE-ProRule" id="PRU00302"/>
    </source>
</evidence>
<reference key="1">
    <citation type="submission" date="2004-06" db="EMBL/GenBank/DDBJ databases">
        <authorList>
            <consortium name="NIH - Xenopus Gene Collection (XGC) project"/>
        </authorList>
    </citation>
    <scope>NUCLEOTIDE SEQUENCE [LARGE SCALE MRNA]</scope>
    <source>
        <tissue>Spleen</tissue>
    </source>
</reference>
<name>SRPX2_XENLA</name>